<comment type="function">
    <text evidence="1">Component of the tectonic-like complex, a complex localized at the transition zone of primary cilia and acting as a barrier that prevents diffusion of transmembrane proteins between the cilia and plasma membranes.</text>
</comment>
<comment type="subunit">
    <text evidence="1">Part of the tectonic-like complex (also named B9 complex). Interacts with TUBG1 (By similarity).</text>
</comment>
<comment type="subcellular location">
    <subcellularLocation>
        <location evidence="1">Cytoplasm</location>
        <location evidence="1">Cytoskeleton</location>
        <location evidence="1">Cilium basal body</location>
    </subcellularLocation>
    <subcellularLocation>
        <location evidence="1">Cytoplasm</location>
        <location evidence="1">Cytoskeleton</location>
        <location evidence="1">Cilium axoneme</location>
    </subcellularLocation>
    <subcellularLocation>
        <location evidence="1">Nucleus</location>
    </subcellularLocation>
</comment>
<comment type="similarity">
    <text evidence="3">Belongs to the B9D family.</text>
</comment>
<proteinExistence type="evidence at transcript level"/>
<sequence>MAEVHVIGQIMGATGFSESSLFCKWGVHTGAAWKLLSGVREGQTQVDTPQIGDMAYWSHPIDLHFATKGLQGWPRLHLQVWSQDSFGRCQLAGYGFCHVPSSPGTHQLDCPTWRPLGSWREQLARAFVGGGPQLLHGDAIYSGADRYRLHTTSGGTVHLELSLLLRHFDRYGVEC</sequence>
<gene>
    <name type="primary">B9D2</name>
</gene>
<dbReference type="EMBL" id="AY911338">
    <property type="protein sequence ID" value="AAW82106.1"/>
    <property type="molecule type" value="mRNA"/>
</dbReference>
<dbReference type="RefSeq" id="NP_001035683.1">
    <property type="nucleotide sequence ID" value="NM_001040593.2"/>
</dbReference>
<dbReference type="FunCoup" id="Q56JY9">
    <property type="interactions" value="703"/>
</dbReference>
<dbReference type="STRING" id="9913.ENSBTAP00000031913"/>
<dbReference type="PaxDb" id="9913-ENSBTAP00000031913"/>
<dbReference type="GeneID" id="616609"/>
<dbReference type="KEGG" id="bta:616609"/>
<dbReference type="CTD" id="80776"/>
<dbReference type="eggNOG" id="KOG4028">
    <property type="taxonomic scope" value="Eukaryota"/>
</dbReference>
<dbReference type="InParanoid" id="Q56JY9"/>
<dbReference type="OrthoDB" id="184109at2759"/>
<dbReference type="Proteomes" id="UP000009136">
    <property type="component" value="Unplaced"/>
</dbReference>
<dbReference type="GO" id="GO:0005813">
    <property type="term" value="C:centrosome"/>
    <property type="evidence" value="ECO:0000250"/>
    <property type="project" value="UniProtKB"/>
</dbReference>
<dbReference type="GO" id="GO:0036064">
    <property type="term" value="C:ciliary basal body"/>
    <property type="evidence" value="ECO:0000250"/>
    <property type="project" value="UniProtKB"/>
</dbReference>
<dbReference type="GO" id="GO:0005737">
    <property type="term" value="C:cytoplasm"/>
    <property type="evidence" value="ECO:0007669"/>
    <property type="project" value="UniProtKB-KW"/>
</dbReference>
<dbReference type="GO" id="GO:0036038">
    <property type="term" value="C:MKS complex"/>
    <property type="evidence" value="ECO:0000250"/>
    <property type="project" value="UniProtKB"/>
</dbReference>
<dbReference type="GO" id="GO:0005634">
    <property type="term" value="C:nucleus"/>
    <property type="evidence" value="ECO:0007669"/>
    <property type="project" value="UniProtKB-SubCell"/>
</dbReference>
<dbReference type="GO" id="GO:0043015">
    <property type="term" value="F:gamma-tubulin binding"/>
    <property type="evidence" value="ECO:0000250"/>
    <property type="project" value="UniProtKB"/>
</dbReference>
<dbReference type="GO" id="GO:0060271">
    <property type="term" value="P:cilium assembly"/>
    <property type="evidence" value="ECO:0000250"/>
    <property type="project" value="UniProtKB"/>
</dbReference>
<dbReference type="InterPro" id="IPR010796">
    <property type="entry name" value="C2_B9-type_dom"/>
</dbReference>
<dbReference type="PANTHER" id="PTHR12968">
    <property type="entry name" value="B9 DOMAIN-CONTAINING"/>
    <property type="match status" value="1"/>
</dbReference>
<dbReference type="PANTHER" id="PTHR12968:SF2">
    <property type="entry name" value="B9 DOMAIN-CONTAINING PROTEIN 2"/>
    <property type="match status" value="1"/>
</dbReference>
<dbReference type="Pfam" id="PF07162">
    <property type="entry name" value="B9-C2"/>
    <property type="match status" value="1"/>
</dbReference>
<dbReference type="PROSITE" id="PS51381">
    <property type="entry name" value="C2_B9"/>
    <property type="match status" value="1"/>
</dbReference>
<evidence type="ECO:0000250" key="1"/>
<evidence type="ECO:0000255" key="2">
    <source>
        <dbReference type="PROSITE-ProRule" id="PRU00713"/>
    </source>
</evidence>
<evidence type="ECO:0000305" key="3"/>
<name>B9D2_BOVIN</name>
<reference key="1">
    <citation type="submission" date="2005-01" db="EMBL/GenBank/DDBJ databases">
        <title>Analysis of sequences obtained from constructed full-length bovine cDNA libraries.</title>
        <authorList>
            <person name="Yu J."/>
            <person name="Meng Y."/>
            <person name="Wang Z."/>
            <person name="Hansen C."/>
            <person name="Li C."/>
            <person name="Moore S.S."/>
        </authorList>
    </citation>
    <scope>NUCLEOTIDE SEQUENCE [LARGE SCALE MRNA]</scope>
    <source>
        <tissue>Lymphoid epithelium</tissue>
    </source>
</reference>
<accession>Q56JY9</accession>
<protein>
    <recommendedName>
        <fullName>B9 domain-containing protein 2</fullName>
    </recommendedName>
</protein>
<feature type="chain" id="PRO_0000307673" description="B9 domain-containing protein 2">
    <location>
        <begin position="1"/>
        <end position="175"/>
    </location>
</feature>
<feature type="domain" description="C2 B9-type" evidence="2">
    <location>
        <begin position="2"/>
        <end position="118"/>
    </location>
</feature>
<keyword id="KW-0966">Cell projection</keyword>
<keyword id="KW-0969">Cilium</keyword>
<keyword id="KW-0970">Cilium biogenesis/degradation</keyword>
<keyword id="KW-0963">Cytoplasm</keyword>
<keyword id="KW-0206">Cytoskeleton</keyword>
<keyword id="KW-0539">Nucleus</keyword>
<keyword id="KW-1185">Reference proteome</keyword>
<organism>
    <name type="scientific">Bos taurus</name>
    <name type="common">Bovine</name>
    <dbReference type="NCBI Taxonomy" id="9913"/>
    <lineage>
        <taxon>Eukaryota</taxon>
        <taxon>Metazoa</taxon>
        <taxon>Chordata</taxon>
        <taxon>Craniata</taxon>
        <taxon>Vertebrata</taxon>
        <taxon>Euteleostomi</taxon>
        <taxon>Mammalia</taxon>
        <taxon>Eutheria</taxon>
        <taxon>Laurasiatheria</taxon>
        <taxon>Artiodactyla</taxon>
        <taxon>Ruminantia</taxon>
        <taxon>Pecora</taxon>
        <taxon>Bovidae</taxon>
        <taxon>Bovinae</taxon>
        <taxon>Bos</taxon>
    </lineage>
</organism>